<name>FENR_EHRRG</name>
<accession>Q5FH31</accession>
<proteinExistence type="inferred from homology"/>
<reference key="1">
    <citation type="journal article" date="2006" name="J. Bacteriol.">
        <title>Comparative genomic analysis of three strains of Ehrlichia ruminantium reveals an active process of genome size plasticity.</title>
        <authorList>
            <person name="Frutos R."/>
            <person name="Viari A."/>
            <person name="Ferraz C."/>
            <person name="Morgat A."/>
            <person name="Eychenie S."/>
            <person name="Kandassamy Y."/>
            <person name="Chantal I."/>
            <person name="Bensaid A."/>
            <person name="Coissac E."/>
            <person name="Vachiery N."/>
            <person name="Demaille J."/>
            <person name="Martinez D."/>
        </authorList>
    </citation>
    <scope>NUCLEOTIDE SEQUENCE [LARGE SCALE GENOMIC DNA]</scope>
    <source>
        <strain>Gardel</strain>
    </source>
</reference>
<sequence length="337" mass="37402">MVDYVTDIVVIGAGPIGIFTVFQSGMLSMQCCVIDTLNEIGGQCVALYPEKPIYDIPAYPIITAKELINNLVEQSKPFDPQYLLGQMAEKIEEYMDYLLVKTNYGTVIQCKAIIIAAGSGAFGPNRLPVDNIIDFENKSVFYSVKQISDFYDKSVMIAGGGDSAADWAVELSKVTKQLYMVHRRKNFRCSPNTSLKLDDLFQRGKINLVVPYQIKQLCGKDGKLDYVVVKNITTSEELTLQVDYLLPFFGTSANLGPILNWGITISGYQIVIDPATCRTNRNKIYAVGDISTYPGKIKLILTGFSESAMACHDIYHIVYPNSPLNFQYSTSKGIPKV</sequence>
<comment type="catalytic activity">
    <reaction evidence="1">
        <text>2 reduced [2Fe-2S]-[ferredoxin] + NADP(+) + H(+) = 2 oxidized [2Fe-2S]-[ferredoxin] + NADPH</text>
        <dbReference type="Rhea" id="RHEA:20125"/>
        <dbReference type="Rhea" id="RHEA-COMP:10000"/>
        <dbReference type="Rhea" id="RHEA-COMP:10001"/>
        <dbReference type="ChEBI" id="CHEBI:15378"/>
        <dbReference type="ChEBI" id="CHEBI:33737"/>
        <dbReference type="ChEBI" id="CHEBI:33738"/>
        <dbReference type="ChEBI" id="CHEBI:57783"/>
        <dbReference type="ChEBI" id="CHEBI:58349"/>
        <dbReference type="EC" id="1.18.1.2"/>
    </reaction>
</comment>
<comment type="cofactor">
    <cofactor evidence="1">
        <name>FAD</name>
        <dbReference type="ChEBI" id="CHEBI:57692"/>
    </cofactor>
    <text evidence="1">Binds 1 FAD per subunit.</text>
</comment>
<comment type="subunit">
    <text evidence="1">Homodimer.</text>
</comment>
<comment type="similarity">
    <text evidence="1">Belongs to the ferredoxin--NADP reductase type 2 family.</text>
</comment>
<feature type="chain" id="PRO_0000364831" description="Ferredoxin--NADP reductase">
    <location>
        <begin position="1"/>
        <end position="337"/>
    </location>
</feature>
<feature type="binding site" evidence="1">
    <location>
        <position position="35"/>
    </location>
    <ligand>
        <name>FAD</name>
        <dbReference type="ChEBI" id="CHEBI:57692"/>
    </ligand>
</feature>
<feature type="binding site" evidence="1">
    <location>
        <position position="43"/>
    </location>
    <ligand>
        <name>FAD</name>
        <dbReference type="ChEBI" id="CHEBI:57692"/>
    </ligand>
</feature>
<feature type="binding site" evidence="1">
    <location>
        <position position="48"/>
    </location>
    <ligand>
        <name>FAD</name>
        <dbReference type="ChEBI" id="CHEBI:57692"/>
    </ligand>
</feature>
<feature type="binding site" evidence="1">
    <location>
        <position position="88"/>
    </location>
    <ligand>
        <name>FAD</name>
        <dbReference type="ChEBI" id="CHEBI:57692"/>
    </ligand>
</feature>
<feature type="binding site" evidence="1">
    <location>
        <position position="122"/>
    </location>
    <ligand>
        <name>FAD</name>
        <dbReference type="ChEBI" id="CHEBI:57692"/>
    </ligand>
</feature>
<feature type="binding site" evidence="1">
    <location>
        <position position="289"/>
    </location>
    <ligand>
        <name>FAD</name>
        <dbReference type="ChEBI" id="CHEBI:57692"/>
    </ligand>
</feature>
<feature type="binding site" evidence="1">
    <location>
        <position position="330"/>
    </location>
    <ligand>
        <name>FAD</name>
        <dbReference type="ChEBI" id="CHEBI:57692"/>
    </ligand>
</feature>
<keyword id="KW-0274">FAD</keyword>
<keyword id="KW-0285">Flavoprotein</keyword>
<keyword id="KW-0521">NADP</keyword>
<keyword id="KW-0560">Oxidoreductase</keyword>
<evidence type="ECO:0000255" key="1">
    <source>
        <dbReference type="HAMAP-Rule" id="MF_01685"/>
    </source>
</evidence>
<organism>
    <name type="scientific">Ehrlichia ruminantium (strain Gardel)</name>
    <dbReference type="NCBI Taxonomy" id="302409"/>
    <lineage>
        <taxon>Bacteria</taxon>
        <taxon>Pseudomonadati</taxon>
        <taxon>Pseudomonadota</taxon>
        <taxon>Alphaproteobacteria</taxon>
        <taxon>Rickettsiales</taxon>
        <taxon>Anaplasmataceae</taxon>
        <taxon>Ehrlichia</taxon>
    </lineage>
</organism>
<protein>
    <recommendedName>
        <fullName evidence="1">Ferredoxin--NADP reductase</fullName>
        <shortName evidence="1">FNR</shortName>
        <shortName evidence="1">Fd-NADP(+) reductase</shortName>
        <ecNumber evidence="1">1.18.1.2</ecNumber>
    </recommendedName>
</protein>
<dbReference type="EC" id="1.18.1.2" evidence="1"/>
<dbReference type="EMBL" id="CR925677">
    <property type="protein sequence ID" value="CAI27862.1"/>
    <property type="molecule type" value="Genomic_DNA"/>
</dbReference>
<dbReference type="RefSeq" id="WP_011255546.1">
    <property type="nucleotide sequence ID" value="NC_006831.1"/>
</dbReference>
<dbReference type="SMR" id="Q5FH31"/>
<dbReference type="KEGG" id="erg:ERGA_CDS_04100"/>
<dbReference type="HOGENOM" id="CLU_031864_5_5_5"/>
<dbReference type="OrthoDB" id="9806179at2"/>
<dbReference type="Proteomes" id="UP000000533">
    <property type="component" value="Chromosome"/>
</dbReference>
<dbReference type="GO" id="GO:0004324">
    <property type="term" value="F:ferredoxin-NADP+ reductase activity"/>
    <property type="evidence" value="ECO:0007669"/>
    <property type="project" value="UniProtKB-UniRule"/>
</dbReference>
<dbReference type="GO" id="GO:0050660">
    <property type="term" value="F:flavin adenine dinucleotide binding"/>
    <property type="evidence" value="ECO:0007669"/>
    <property type="project" value="UniProtKB-UniRule"/>
</dbReference>
<dbReference type="GO" id="GO:0050661">
    <property type="term" value="F:NADP binding"/>
    <property type="evidence" value="ECO:0007669"/>
    <property type="project" value="UniProtKB-UniRule"/>
</dbReference>
<dbReference type="Gene3D" id="3.50.50.60">
    <property type="entry name" value="FAD/NAD(P)-binding domain"/>
    <property type="match status" value="2"/>
</dbReference>
<dbReference type="HAMAP" id="MF_01685">
    <property type="entry name" value="FENR2"/>
    <property type="match status" value="1"/>
</dbReference>
<dbReference type="InterPro" id="IPR036188">
    <property type="entry name" value="FAD/NAD-bd_sf"/>
</dbReference>
<dbReference type="InterPro" id="IPR023753">
    <property type="entry name" value="FAD/NAD-binding_dom"/>
</dbReference>
<dbReference type="InterPro" id="IPR022890">
    <property type="entry name" value="Fd--NADP_Rdtase_type_2"/>
</dbReference>
<dbReference type="InterPro" id="IPR050097">
    <property type="entry name" value="Ferredoxin-NADP_redctase_2"/>
</dbReference>
<dbReference type="PANTHER" id="PTHR48105">
    <property type="entry name" value="THIOREDOXIN REDUCTASE 1-RELATED-RELATED"/>
    <property type="match status" value="1"/>
</dbReference>
<dbReference type="Pfam" id="PF07992">
    <property type="entry name" value="Pyr_redox_2"/>
    <property type="match status" value="1"/>
</dbReference>
<dbReference type="PRINTS" id="PR00368">
    <property type="entry name" value="FADPNR"/>
</dbReference>
<dbReference type="PRINTS" id="PR00469">
    <property type="entry name" value="PNDRDTASEII"/>
</dbReference>
<dbReference type="SUPFAM" id="SSF51905">
    <property type="entry name" value="FAD/NAD(P)-binding domain"/>
    <property type="match status" value="1"/>
</dbReference>
<gene>
    <name type="ordered locus">ERGA_CDS_04100</name>
</gene>